<sequence>MAVISMKQLLEAGVHFGHQTRRWNPKMKKYIFTERNGIYIIDLQKTVKKVEEAYNFVKQISEEGGKVLFVGTKKQAQESVKAEAERAGQFYVNQRWLGGILTNYKTISKRIKRISEIEKMEEDGLFEVLPKKEVVELKKEYDRLIKFLGGIRDMKSMPQALFVVDPRKERNAIAEARKLNIPIVGIVDTNCDPDEIDYVIPANDDAIRAVKLLTGKMADAILEGQQGVSNEEVAAEQNINLDDKEESEQAETTEENTSVESN</sequence>
<proteinExistence type="inferred from homology"/>
<dbReference type="EMBL" id="CP000029">
    <property type="protein sequence ID" value="AAW54176.1"/>
    <property type="molecule type" value="Genomic_DNA"/>
</dbReference>
<dbReference type="RefSeq" id="WP_001832557.1">
    <property type="nucleotide sequence ID" value="NC_002976.3"/>
</dbReference>
<dbReference type="SMR" id="Q5HPT5"/>
<dbReference type="STRING" id="176279.SERP0823"/>
<dbReference type="GeneID" id="50018932"/>
<dbReference type="KEGG" id="ser:SERP0823"/>
<dbReference type="eggNOG" id="COG0052">
    <property type="taxonomic scope" value="Bacteria"/>
</dbReference>
<dbReference type="HOGENOM" id="CLU_040318_1_2_9"/>
<dbReference type="Proteomes" id="UP000000531">
    <property type="component" value="Chromosome"/>
</dbReference>
<dbReference type="GO" id="GO:0022627">
    <property type="term" value="C:cytosolic small ribosomal subunit"/>
    <property type="evidence" value="ECO:0007669"/>
    <property type="project" value="TreeGrafter"/>
</dbReference>
<dbReference type="GO" id="GO:0003735">
    <property type="term" value="F:structural constituent of ribosome"/>
    <property type="evidence" value="ECO:0007669"/>
    <property type="project" value="InterPro"/>
</dbReference>
<dbReference type="GO" id="GO:0006412">
    <property type="term" value="P:translation"/>
    <property type="evidence" value="ECO:0007669"/>
    <property type="project" value="UniProtKB-UniRule"/>
</dbReference>
<dbReference type="CDD" id="cd01425">
    <property type="entry name" value="RPS2"/>
    <property type="match status" value="1"/>
</dbReference>
<dbReference type="FunFam" id="1.10.287.610:FF:000001">
    <property type="entry name" value="30S ribosomal protein S2"/>
    <property type="match status" value="1"/>
</dbReference>
<dbReference type="Gene3D" id="3.40.50.10490">
    <property type="entry name" value="Glucose-6-phosphate isomerase like protein, domain 1"/>
    <property type="match status" value="1"/>
</dbReference>
<dbReference type="Gene3D" id="1.10.287.610">
    <property type="entry name" value="Helix hairpin bin"/>
    <property type="match status" value="1"/>
</dbReference>
<dbReference type="HAMAP" id="MF_00291_B">
    <property type="entry name" value="Ribosomal_uS2_B"/>
    <property type="match status" value="1"/>
</dbReference>
<dbReference type="InterPro" id="IPR001865">
    <property type="entry name" value="Ribosomal_uS2"/>
</dbReference>
<dbReference type="InterPro" id="IPR005706">
    <property type="entry name" value="Ribosomal_uS2_bac/mit/plastid"/>
</dbReference>
<dbReference type="InterPro" id="IPR018130">
    <property type="entry name" value="Ribosomal_uS2_CS"/>
</dbReference>
<dbReference type="InterPro" id="IPR023591">
    <property type="entry name" value="Ribosomal_uS2_flav_dom_sf"/>
</dbReference>
<dbReference type="NCBIfam" id="TIGR01011">
    <property type="entry name" value="rpsB_bact"/>
    <property type="match status" value="1"/>
</dbReference>
<dbReference type="PANTHER" id="PTHR12534">
    <property type="entry name" value="30S RIBOSOMAL PROTEIN S2 PROKARYOTIC AND ORGANELLAR"/>
    <property type="match status" value="1"/>
</dbReference>
<dbReference type="PANTHER" id="PTHR12534:SF0">
    <property type="entry name" value="SMALL RIBOSOMAL SUBUNIT PROTEIN US2M"/>
    <property type="match status" value="1"/>
</dbReference>
<dbReference type="Pfam" id="PF00318">
    <property type="entry name" value="Ribosomal_S2"/>
    <property type="match status" value="1"/>
</dbReference>
<dbReference type="PRINTS" id="PR00395">
    <property type="entry name" value="RIBOSOMALS2"/>
</dbReference>
<dbReference type="SUPFAM" id="SSF52313">
    <property type="entry name" value="Ribosomal protein S2"/>
    <property type="match status" value="1"/>
</dbReference>
<dbReference type="PROSITE" id="PS00962">
    <property type="entry name" value="RIBOSOMAL_S2_1"/>
    <property type="match status" value="1"/>
</dbReference>
<dbReference type="PROSITE" id="PS00963">
    <property type="entry name" value="RIBOSOMAL_S2_2"/>
    <property type="match status" value="1"/>
</dbReference>
<feature type="chain" id="PRO_0000134245" description="Small ribosomal subunit protein uS2">
    <location>
        <begin position="1"/>
        <end position="262"/>
    </location>
</feature>
<feature type="region of interest" description="Disordered" evidence="2">
    <location>
        <begin position="228"/>
        <end position="262"/>
    </location>
</feature>
<feature type="compositionally biased region" description="Acidic residues" evidence="2">
    <location>
        <begin position="243"/>
        <end position="254"/>
    </location>
</feature>
<gene>
    <name evidence="1" type="primary">rpsB</name>
    <name type="ordered locus">SERP0823</name>
</gene>
<keyword id="KW-1185">Reference proteome</keyword>
<keyword id="KW-0687">Ribonucleoprotein</keyword>
<keyword id="KW-0689">Ribosomal protein</keyword>
<name>RS2_STAEQ</name>
<reference key="1">
    <citation type="journal article" date="2005" name="J. Bacteriol.">
        <title>Insights on evolution of virulence and resistance from the complete genome analysis of an early methicillin-resistant Staphylococcus aureus strain and a biofilm-producing methicillin-resistant Staphylococcus epidermidis strain.</title>
        <authorList>
            <person name="Gill S.R."/>
            <person name="Fouts D.E."/>
            <person name="Archer G.L."/>
            <person name="Mongodin E.F."/>
            <person name="DeBoy R.T."/>
            <person name="Ravel J."/>
            <person name="Paulsen I.T."/>
            <person name="Kolonay J.F."/>
            <person name="Brinkac L.M."/>
            <person name="Beanan M.J."/>
            <person name="Dodson R.J."/>
            <person name="Daugherty S.C."/>
            <person name="Madupu R."/>
            <person name="Angiuoli S.V."/>
            <person name="Durkin A.S."/>
            <person name="Haft D.H."/>
            <person name="Vamathevan J.J."/>
            <person name="Khouri H."/>
            <person name="Utterback T.R."/>
            <person name="Lee C."/>
            <person name="Dimitrov G."/>
            <person name="Jiang L."/>
            <person name="Qin H."/>
            <person name="Weidman J."/>
            <person name="Tran K."/>
            <person name="Kang K.H."/>
            <person name="Hance I.R."/>
            <person name="Nelson K.E."/>
            <person name="Fraser C.M."/>
        </authorList>
    </citation>
    <scope>NUCLEOTIDE SEQUENCE [LARGE SCALE GENOMIC DNA]</scope>
    <source>
        <strain>ATCC 35984 / DSM 28319 / BCRC 17069 / CCUG 31568 / BM 3577 / RP62A</strain>
    </source>
</reference>
<protein>
    <recommendedName>
        <fullName evidence="1">Small ribosomal subunit protein uS2</fullName>
    </recommendedName>
    <alternativeName>
        <fullName evidence="3">30S ribosomal protein S2</fullName>
    </alternativeName>
</protein>
<accession>Q5HPT5</accession>
<organism>
    <name type="scientific">Staphylococcus epidermidis (strain ATCC 35984 / DSM 28319 / BCRC 17069 / CCUG 31568 / BM 3577 / RP62A)</name>
    <dbReference type="NCBI Taxonomy" id="176279"/>
    <lineage>
        <taxon>Bacteria</taxon>
        <taxon>Bacillati</taxon>
        <taxon>Bacillota</taxon>
        <taxon>Bacilli</taxon>
        <taxon>Bacillales</taxon>
        <taxon>Staphylococcaceae</taxon>
        <taxon>Staphylococcus</taxon>
    </lineage>
</organism>
<comment type="similarity">
    <text evidence="1">Belongs to the universal ribosomal protein uS2 family.</text>
</comment>
<evidence type="ECO:0000255" key="1">
    <source>
        <dbReference type="HAMAP-Rule" id="MF_00291"/>
    </source>
</evidence>
<evidence type="ECO:0000256" key="2">
    <source>
        <dbReference type="SAM" id="MobiDB-lite"/>
    </source>
</evidence>
<evidence type="ECO:0000305" key="3"/>